<keyword id="KW-0150">Chloroplast</keyword>
<keyword id="KW-0934">Plastid</keyword>
<keyword id="KW-1185">Reference proteome</keyword>
<keyword id="KW-0346">Stress response</keyword>
<keyword id="KW-0809">Transit peptide</keyword>
<name>EXEC1_ORYSJ</name>
<evidence type="ECO:0000250" key="1">
    <source>
        <dbReference type="UniProtKB" id="Q93YW0"/>
    </source>
</evidence>
<evidence type="ECO:0000255" key="2"/>
<evidence type="ECO:0000256" key="3">
    <source>
        <dbReference type="SAM" id="MobiDB-lite"/>
    </source>
</evidence>
<evidence type="ECO:0000303" key="4">
    <source>
    </source>
</evidence>
<evidence type="ECO:0000305" key="5"/>
<evidence type="ECO:0000312" key="6">
    <source>
        <dbReference type="EMBL" id="AAL59023.1"/>
    </source>
</evidence>
<evidence type="ECO:0000312" key="7">
    <source>
        <dbReference type="EMBL" id="AAP54343.1"/>
    </source>
</evidence>
<evidence type="ECO:0000312" key="8">
    <source>
        <dbReference type="EMBL" id="BAF26809.2"/>
    </source>
</evidence>
<organism>
    <name type="scientific">Oryza sativa subsp. japonica</name>
    <name type="common">Rice</name>
    <dbReference type="NCBI Taxonomy" id="39947"/>
    <lineage>
        <taxon>Eukaryota</taxon>
        <taxon>Viridiplantae</taxon>
        <taxon>Streptophyta</taxon>
        <taxon>Embryophyta</taxon>
        <taxon>Tracheophyta</taxon>
        <taxon>Spermatophyta</taxon>
        <taxon>Magnoliopsida</taxon>
        <taxon>Liliopsida</taxon>
        <taxon>Poales</taxon>
        <taxon>Poaceae</taxon>
        <taxon>BOP clade</taxon>
        <taxon>Oryzoideae</taxon>
        <taxon>Oryzeae</taxon>
        <taxon>Oryzinae</taxon>
        <taxon>Oryza</taxon>
        <taxon>Oryza sativa</taxon>
    </lineage>
</organism>
<proteinExistence type="evidence at transcript level"/>
<sequence length="727" mass="81208">MAAAVSTAPRAPLPAGAVSSSCCSSSSSSASMSRRWDPSPNPSSGSGSRLFLAARRGERLRVRRLAGAAPAPAPRRRVSSVVRCGGGGGGVRSPDDADAGSGERRRGWDALFHDAFQGAVRRWSEYVGSHWPLAPAGKDAGLGKRVESRREEQVRGEVEEEEGKWSWERWKQHFALIEESERLVDELQLQLRTAVYREDFRSAHKLKLAIAATSKNDTVGRAISDLNSAIEEERYMDATYIRDHAGAGLLGWWSGISGNLSDPYGLIIRISAEHGRYVAKSYDTRQLNSDGPGFPIFEIYFAEANGGYNLQAVHLKPDDSDSQQLSNTLREKLGMDSINISSSSFGAKHEDHNEGVNMDDQNSDDSDISAGPAGFKNLPSDSTPVPRVKILKVVPMENVNQDYIIKIFDQMSDEDDENDNPEDEIESSEDIGDGDNVEEAEAASAEDNVDESGDESDIEALISIDFITEDDKDFMSPSSTKAFERMPARLERRDRFSFSFYTEQYSKRQDVEKVQGISKEKVGLRTAQQDDDDLQFDRVKLVGSNRKLSVLQLGIKQHNNKVQQKLYGVTHFSRIQIPVSSDPLTGLYMTASGFDSEILSLQRKFGQWREDDSSEEHRDLQFYEYVEAVKLTGDNLVPAGQVVFRAKVGKHYQLPHKGIIPRELGVVARYKGERRIADPGFQNPRWVDGELLILDGKFIRDGPVIAFFYWTSNFHLFEFFRRLKLPD</sequence>
<feature type="transit peptide" description="Chloroplast" evidence="2">
    <location>
        <begin position="1"/>
        <end position="83"/>
    </location>
</feature>
<feature type="chain" id="PRO_0000431896" description="Protein EXECUTER 1, chloroplastic" evidence="2">
    <location>
        <begin position="84"/>
        <end position="727"/>
    </location>
</feature>
<feature type="region of interest" description="Disordered" evidence="3">
    <location>
        <begin position="1"/>
        <end position="51"/>
    </location>
</feature>
<feature type="region of interest" description="Disordered" evidence="3">
    <location>
        <begin position="65"/>
        <end position="102"/>
    </location>
</feature>
<feature type="region of interest" description="Disordered" evidence="3">
    <location>
        <begin position="340"/>
        <end position="381"/>
    </location>
</feature>
<feature type="region of interest" description="Disordered" evidence="3">
    <location>
        <begin position="413"/>
        <end position="455"/>
    </location>
</feature>
<feature type="compositionally biased region" description="Low complexity" evidence="3">
    <location>
        <begin position="19"/>
        <end position="33"/>
    </location>
</feature>
<feature type="compositionally biased region" description="Low complexity" evidence="3">
    <location>
        <begin position="42"/>
        <end position="51"/>
    </location>
</feature>
<feature type="compositionally biased region" description="Acidic residues" evidence="3">
    <location>
        <begin position="413"/>
        <end position="441"/>
    </location>
</feature>
<feature type="sequence conflict" description="In Ref. 5; AK243136." evidence="5" ref="5">
    <original>G</original>
    <variation>R</variation>
    <location>
        <position position="672"/>
    </location>
</feature>
<comment type="function">
    <text evidence="1">Together with EX2, enables higher plants to perceive singlet oxygen as a stress signal in plastid that activates a genetically determined nuclear stress response program which triggers a programmed cell death (PCD). This transfer of singlet oxygen-induced stress-related signals from the plastid to the nucleus that triggers genetically controlled PCD pathway is unique to photosynthetic eukaryotes and operates under mild stress conditions, impeding photosystem II (PSII) without causing photooxidative damage of the plant.</text>
</comment>
<comment type="subcellular location">
    <subcellularLocation>
        <location evidence="1">Plastid</location>
        <location evidence="1">Chloroplast</location>
    </subcellularLocation>
</comment>
<comment type="sequence caution" evidence="5">
    <conflict type="erroneous gene model prediction">
        <sequence resource="EMBL-CDS" id="BAF26809"/>
    </conflict>
</comment>
<dbReference type="EMBL" id="AC087182">
    <property type="protein sequence ID" value="AAL59023.1"/>
    <property type="molecule type" value="Genomic_DNA"/>
</dbReference>
<dbReference type="EMBL" id="DP000086">
    <property type="protein sequence ID" value="AAP54343.1"/>
    <property type="molecule type" value="Genomic_DNA"/>
</dbReference>
<dbReference type="EMBL" id="DP000086">
    <property type="protein sequence ID" value="ABB47802.1"/>
    <property type="molecule type" value="Genomic_DNA"/>
</dbReference>
<dbReference type="EMBL" id="AP008216">
    <property type="protein sequence ID" value="BAF26809.2"/>
    <property type="status" value="ALT_SEQ"/>
    <property type="molecule type" value="Genomic_DNA"/>
</dbReference>
<dbReference type="EMBL" id="AP014966">
    <property type="protein sequence ID" value="BAT11376.1"/>
    <property type="molecule type" value="Genomic_DNA"/>
</dbReference>
<dbReference type="EMBL" id="AK243136">
    <property type="status" value="NOT_ANNOTATED_CDS"/>
    <property type="molecule type" value="mRNA"/>
</dbReference>
<dbReference type="RefSeq" id="XP_015614170.1">
    <property type="nucleotide sequence ID" value="XM_015758684.1"/>
</dbReference>
<dbReference type="RefSeq" id="XP_015614172.1">
    <property type="nucleotide sequence ID" value="XM_015758686.1"/>
</dbReference>
<dbReference type="SMR" id="Q7XD99"/>
<dbReference type="FunCoup" id="Q7XD99">
    <property type="interactions" value="1491"/>
</dbReference>
<dbReference type="STRING" id="39947.Q7XD99"/>
<dbReference type="PaxDb" id="39947-Q7XD99"/>
<dbReference type="EnsemblPlants" id="Os10t0485300-01">
    <property type="protein sequence ID" value="Os10t0485300-01"/>
    <property type="gene ID" value="Os10g0485300"/>
</dbReference>
<dbReference type="Gramene" id="Os10t0485300-01">
    <property type="protein sequence ID" value="Os10t0485300-01"/>
    <property type="gene ID" value="Os10g0485300"/>
</dbReference>
<dbReference type="KEGG" id="dosa:Os10g0485300"/>
<dbReference type="eggNOG" id="ENOG502QQS3">
    <property type="taxonomic scope" value="Eukaryota"/>
</dbReference>
<dbReference type="HOGENOM" id="CLU_019201_0_0_1"/>
<dbReference type="InParanoid" id="Q7XD99"/>
<dbReference type="OMA" id="HNEGVNM"/>
<dbReference type="OrthoDB" id="722566at2759"/>
<dbReference type="Proteomes" id="UP000000763">
    <property type="component" value="Chromosome 10"/>
</dbReference>
<dbReference type="Proteomes" id="UP000059680">
    <property type="component" value="Chromosome 10"/>
</dbReference>
<dbReference type="GO" id="GO:0009507">
    <property type="term" value="C:chloroplast"/>
    <property type="evidence" value="ECO:0007669"/>
    <property type="project" value="UniProtKB-SubCell"/>
</dbReference>
<dbReference type="GO" id="GO:0042651">
    <property type="term" value="C:thylakoid membrane"/>
    <property type="evidence" value="ECO:0000318"/>
    <property type="project" value="GO_Central"/>
</dbReference>
<dbReference type="GO" id="GO:0000304">
    <property type="term" value="P:response to singlet oxygen"/>
    <property type="evidence" value="ECO:0000318"/>
    <property type="project" value="GO_Central"/>
</dbReference>
<dbReference type="GO" id="GO:0010343">
    <property type="term" value="P:singlet oxygen-mediated programmed cell death"/>
    <property type="evidence" value="ECO:0007669"/>
    <property type="project" value="InterPro"/>
</dbReference>
<dbReference type="InterPro" id="IPR044680">
    <property type="entry name" value="EX1/2"/>
</dbReference>
<dbReference type="PANTHER" id="PTHR33917">
    <property type="entry name" value="PROTEIN EXECUTER 1, CHLOROPLASTIC"/>
    <property type="match status" value="1"/>
</dbReference>
<dbReference type="PANTHER" id="PTHR33917:SF3">
    <property type="entry name" value="PROTEIN EXECUTER 1, CHLOROPLASTIC"/>
    <property type="match status" value="1"/>
</dbReference>
<dbReference type="Pfam" id="PF12014">
    <property type="entry name" value="Cyclin_D1_bind"/>
    <property type="match status" value="1"/>
</dbReference>
<accession>Q7XD99</accession>
<accession>A0A0P0XVV8</accession>
<accession>Q0IWV6</accession>
<accession>Q8W364</accession>
<reference key="1">
    <citation type="journal article" date="2003" name="Science">
        <title>In-depth view of structure, activity, and evolution of rice chromosome 10.</title>
        <authorList>
            <person name="Yu Y."/>
            <person name="Rambo T."/>
            <person name="Currie J."/>
            <person name="Saski C."/>
            <person name="Kim H.-R."/>
            <person name="Collura K."/>
            <person name="Thompson S."/>
            <person name="Simmons J."/>
            <person name="Yang T.-J."/>
            <person name="Nah G."/>
            <person name="Patel A.J."/>
            <person name="Thurmond S."/>
            <person name="Henry D."/>
            <person name="Oates R."/>
            <person name="Palmer M."/>
            <person name="Pries G."/>
            <person name="Gibson J."/>
            <person name="Anderson H."/>
            <person name="Paradkar M."/>
            <person name="Crane L."/>
            <person name="Dale J."/>
            <person name="Carver M.B."/>
            <person name="Wood T."/>
            <person name="Frisch D."/>
            <person name="Engler F."/>
            <person name="Soderlund C."/>
            <person name="Palmer L.E."/>
            <person name="Teytelman L."/>
            <person name="Nascimento L."/>
            <person name="De la Bastide M."/>
            <person name="Spiegel L."/>
            <person name="Ware D."/>
            <person name="O'Shaughnessy A."/>
            <person name="Dike S."/>
            <person name="Dedhia N."/>
            <person name="Preston R."/>
            <person name="Huang E."/>
            <person name="Ferraro K."/>
            <person name="Kuit K."/>
            <person name="Miller B."/>
            <person name="Zutavern T."/>
            <person name="Katzenberger F."/>
            <person name="Muller S."/>
            <person name="Balija V."/>
            <person name="Martienssen R.A."/>
            <person name="Stein L."/>
            <person name="Minx P."/>
            <person name="Johnson D."/>
            <person name="Cordum H."/>
            <person name="Mardis E."/>
            <person name="Cheng Z."/>
            <person name="Jiang J."/>
            <person name="Wilson R."/>
            <person name="McCombie W.R."/>
            <person name="Wing R.A."/>
            <person name="Yuan Q."/>
            <person name="Ouyang S."/>
            <person name="Liu J."/>
            <person name="Jones K.M."/>
            <person name="Gansberger K."/>
            <person name="Moffat K."/>
            <person name="Hill J."/>
            <person name="Tsitrin T."/>
            <person name="Overton L."/>
            <person name="Bera J."/>
            <person name="Kim M."/>
            <person name="Jin S."/>
            <person name="Tallon L."/>
            <person name="Ciecko A."/>
            <person name="Pai G."/>
            <person name="Van Aken S."/>
            <person name="Utterback T."/>
            <person name="Reidmuller S."/>
            <person name="Bormann J."/>
            <person name="Feldblyum T."/>
            <person name="Hsiao J."/>
            <person name="Zismann V."/>
            <person name="Blunt S."/>
            <person name="de Vazeille A.R."/>
            <person name="Shaffer T."/>
            <person name="Koo H."/>
            <person name="Suh B."/>
            <person name="Yang Q."/>
            <person name="Haas B."/>
            <person name="Peterson J."/>
            <person name="Pertea M."/>
            <person name="Volfovsky N."/>
            <person name="Wortman J."/>
            <person name="White O."/>
            <person name="Salzberg S.L."/>
            <person name="Fraser C.M."/>
            <person name="Buell C.R."/>
            <person name="Messing J."/>
            <person name="Song R."/>
            <person name="Fuks G."/>
            <person name="Llaca V."/>
            <person name="Kovchak S."/>
            <person name="Young S."/>
            <person name="Bowers J.E."/>
            <person name="Paterson A.H."/>
            <person name="Johns M.A."/>
            <person name="Mao L."/>
            <person name="Pan H."/>
            <person name="Dean R.A."/>
        </authorList>
    </citation>
    <scope>NUCLEOTIDE SEQUENCE [LARGE SCALE GENOMIC DNA]</scope>
    <source>
        <strain>cv. Nipponbare</strain>
    </source>
</reference>
<reference key="2">
    <citation type="journal article" date="2005" name="Nature">
        <title>The map-based sequence of the rice genome.</title>
        <authorList>
            <consortium name="International rice genome sequencing project (IRGSP)"/>
        </authorList>
    </citation>
    <scope>NUCLEOTIDE SEQUENCE [LARGE SCALE GENOMIC DNA]</scope>
    <source>
        <strain>cv. Nipponbare</strain>
    </source>
</reference>
<reference key="3">
    <citation type="journal article" date="2008" name="Nucleic Acids Res.">
        <title>The rice annotation project database (RAP-DB): 2008 update.</title>
        <authorList>
            <consortium name="The rice annotation project (RAP)"/>
        </authorList>
    </citation>
    <scope>GENOME REANNOTATION</scope>
    <source>
        <strain>cv. Nipponbare</strain>
    </source>
</reference>
<reference key="4">
    <citation type="journal article" date="2013" name="Rice">
        <title>Improvement of the Oryza sativa Nipponbare reference genome using next generation sequence and optical map data.</title>
        <authorList>
            <person name="Kawahara Y."/>
            <person name="de la Bastide M."/>
            <person name="Hamilton J.P."/>
            <person name="Kanamori H."/>
            <person name="McCombie W.R."/>
            <person name="Ouyang S."/>
            <person name="Schwartz D.C."/>
            <person name="Tanaka T."/>
            <person name="Wu J."/>
            <person name="Zhou S."/>
            <person name="Childs K.L."/>
            <person name="Davidson R.M."/>
            <person name="Lin H."/>
            <person name="Quesada-Ocampo L."/>
            <person name="Vaillancourt B."/>
            <person name="Sakai H."/>
            <person name="Lee S.S."/>
            <person name="Kim J."/>
            <person name="Numa H."/>
            <person name="Itoh T."/>
            <person name="Buell C.R."/>
            <person name="Matsumoto T."/>
        </authorList>
    </citation>
    <scope>GENOME REANNOTATION</scope>
    <source>
        <strain>cv. Nipponbare</strain>
    </source>
</reference>
<reference key="5">
    <citation type="submission" date="2006-10" db="EMBL/GenBank/DDBJ databases">
        <title>Oryza sativa full length cDNA.</title>
        <authorList>
            <consortium name="The rice full-length cDNA consortium"/>
        </authorList>
    </citation>
    <scope>NUCLEOTIDE SEQUENCE [LARGE SCALE MRNA]</scope>
    <source>
        <strain>cv. Nipponbare</strain>
    </source>
</reference>
<reference key="6">
    <citation type="journal article" date="2007" name="Proc. Natl. Acad. Sci. U.S.A.">
        <title>EXECUTER1- and EXECUTER2-dependent transfer of stress-related signals from the plastid to the nucleus of Arabidopsis thaliana.</title>
        <authorList>
            <person name="Lee K.P."/>
            <person name="Kim C."/>
            <person name="Landgraf F."/>
            <person name="Apel K."/>
        </authorList>
    </citation>
    <scope>GENE FAMILY</scope>
    <scope>NOMENCLATURE</scope>
</reference>
<protein>
    <recommendedName>
        <fullName evidence="5">Protein EXECUTER 1, chloroplastic</fullName>
        <shortName evidence="4">OsEX1</shortName>
    </recommendedName>
</protein>
<gene>
    <name evidence="5" type="primary">EX1</name>
    <name evidence="8" type="ordered locus">Os10g0485300</name>
    <name evidence="7" type="ordered locus">LOC_Os10g34400</name>
    <name evidence="6" type="ORF">OSJNBa0029C15.6</name>
</gene>